<dbReference type="EC" id="2.5.1.75" evidence="1"/>
<dbReference type="EMBL" id="CP000614">
    <property type="protein sequence ID" value="ABO53735.1"/>
    <property type="molecule type" value="Genomic_DNA"/>
</dbReference>
<dbReference type="SMR" id="A4JBT2"/>
<dbReference type="KEGG" id="bvi:Bcep1808_0723"/>
<dbReference type="eggNOG" id="COG0324">
    <property type="taxonomic scope" value="Bacteria"/>
</dbReference>
<dbReference type="HOGENOM" id="CLU_032616_0_0_4"/>
<dbReference type="Proteomes" id="UP000002287">
    <property type="component" value="Chromosome 1"/>
</dbReference>
<dbReference type="GO" id="GO:0005524">
    <property type="term" value="F:ATP binding"/>
    <property type="evidence" value="ECO:0007669"/>
    <property type="project" value="UniProtKB-UniRule"/>
</dbReference>
<dbReference type="GO" id="GO:0052381">
    <property type="term" value="F:tRNA dimethylallyltransferase activity"/>
    <property type="evidence" value="ECO:0007669"/>
    <property type="project" value="UniProtKB-UniRule"/>
</dbReference>
<dbReference type="GO" id="GO:0006400">
    <property type="term" value="P:tRNA modification"/>
    <property type="evidence" value="ECO:0007669"/>
    <property type="project" value="TreeGrafter"/>
</dbReference>
<dbReference type="FunFam" id="1.10.20.140:FF:000001">
    <property type="entry name" value="tRNA dimethylallyltransferase"/>
    <property type="match status" value="1"/>
</dbReference>
<dbReference type="Gene3D" id="1.10.20.140">
    <property type="match status" value="1"/>
</dbReference>
<dbReference type="Gene3D" id="3.40.50.300">
    <property type="entry name" value="P-loop containing nucleotide triphosphate hydrolases"/>
    <property type="match status" value="1"/>
</dbReference>
<dbReference type="HAMAP" id="MF_00185">
    <property type="entry name" value="IPP_trans"/>
    <property type="match status" value="1"/>
</dbReference>
<dbReference type="InterPro" id="IPR039657">
    <property type="entry name" value="Dimethylallyltransferase"/>
</dbReference>
<dbReference type="InterPro" id="IPR018022">
    <property type="entry name" value="IPT"/>
</dbReference>
<dbReference type="InterPro" id="IPR027417">
    <property type="entry name" value="P-loop_NTPase"/>
</dbReference>
<dbReference type="NCBIfam" id="TIGR00174">
    <property type="entry name" value="miaA"/>
    <property type="match status" value="1"/>
</dbReference>
<dbReference type="PANTHER" id="PTHR11088">
    <property type="entry name" value="TRNA DIMETHYLALLYLTRANSFERASE"/>
    <property type="match status" value="1"/>
</dbReference>
<dbReference type="PANTHER" id="PTHR11088:SF60">
    <property type="entry name" value="TRNA DIMETHYLALLYLTRANSFERASE"/>
    <property type="match status" value="1"/>
</dbReference>
<dbReference type="Pfam" id="PF01715">
    <property type="entry name" value="IPPT"/>
    <property type="match status" value="1"/>
</dbReference>
<dbReference type="SUPFAM" id="SSF52540">
    <property type="entry name" value="P-loop containing nucleoside triphosphate hydrolases"/>
    <property type="match status" value="1"/>
</dbReference>
<protein>
    <recommendedName>
        <fullName evidence="1">tRNA dimethylallyltransferase</fullName>
        <ecNumber evidence="1">2.5.1.75</ecNumber>
    </recommendedName>
    <alternativeName>
        <fullName evidence="1">Dimethylallyl diphosphate:tRNA dimethylallyltransferase</fullName>
        <shortName evidence="1">DMAPP:tRNA dimethylallyltransferase</shortName>
        <shortName evidence="1">DMATase</shortName>
    </alternativeName>
    <alternativeName>
        <fullName evidence="1">Isopentenyl-diphosphate:tRNA isopentenyltransferase</fullName>
        <shortName evidence="1">IPP transferase</shortName>
        <shortName evidence="1">IPPT</shortName>
        <shortName evidence="1">IPTase</shortName>
    </alternativeName>
</protein>
<name>MIAA_BURVG</name>
<keyword id="KW-0067">ATP-binding</keyword>
<keyword id="KW-0460">Magnesium</keyword>
<keyword id="KW-0547">Nucleotide-binding</keyword>
<keyword id="KW-0808">Transferase</keyword>
<keyword id="KW-0819">tRNA processing</keyword>
<feature type="chain" id="PRO_1000020580" description="tRNA dimethylallyltransferase">
    <location>
        <begin position="1"/>
        <end position="324"/>
    </location>
</feature>
<feature type="region of interest" description="Interaction with substrate tRNA" evidence="1">
    <location>
        <begin position="42"/>
        <end position="45"/>
    </location>
</feature>
<feature type="region of interest" description="Interaction with substrate tRNA" evidence="1">
    <location>
        <begin position="166"/>
        <end position="170"/>
    </location>
</feature>
<feature type="region of interest" description="Interaction with substrate tRNA" evidence="1">
    <location>
        <begin position="251"/>
        <end position="256"/>
    </location>
</feature>
<feature type="region of interest" description="Interaction with substrate tRNA" evidence="1">
    <location>
        <begin position="284"/>
        <end position="291"/>
    </location>
</feature>
<feature type="binding site" evidence="1">
    <location>
        <begin position="17"/>
        <end position="24"/>
    </location>
    <ligand>
        <name>ATP</name>
        <dbReference type="ChEBI" id="CHEBI:30616"/>
    </ligand>
</feature>
<feature type="binding site" evidence="1">
    <location>
        <begin position="19"/>
        <end position="24"/>
    </location>
    <ligand>
        <name>substrate</name>
    </ligand>
</feature>
<feature type="site" description="Interaction with substrate tRNA" evidence="1">
    <location>
        <position position="108"/>
    </location>
</feature>
<feature type="site" description="Interaction with substrate tRNA" evidence="1">
    <location>
        <position position="130"/>
    </location>
</feature>
<reference key="1">
    <citation type="submission" date="2007-03" db="EMBL/GenBank/DDBJ databases">
        <title>Complete sequence of chromosome 1 of Burkholderia vietnamiensis G4.</title>
        <authorList>
            <consortium name="US DOE Joint Genome Institute"/>
            <person name="Copeland A."/>
            <person name="Lucas S."/>
            <person name="Lapidus A."/>
            <person name="Barry K."/>
            <person name="Detter J.C."/>
            <person name="Glavina del Rio T."/>
            <person name="Hammon N."/>
            <person name="Israni S."/>
            <person name="Dalin E."/>
            <person name="Tice H."/>
            <person name="Pitluck S."/>
            <person name="Chain P."/>
            <person name="Malfatti S."/>
            <person name="Shin M."/>
            <person name="Vergez L."/>
            <person name="Schmutz J."/>
            <person name="Larimer F."/>
            <person name="Land M."/>
            <person name="Hauser L."/>
            <person name="Kyrpides N."/>
            <person name="Tiedje J."/>
            <person name="Richardson P."/>
        </authorList>
    </citation>
    <scope>NUCLEOTIDE SEQUENCE [LARGE SCALE GENOMIC DNA]</scope>
    <source>
        <strain>G4 / LMG 22486</strain>
    </source>
</reference>
<evidence type="ECO:0000255" key="1">
    <source>
        <dbReference type="HAMAP-Rule" id="MF_00185"/>
    </source>
</evidence>
<proteinExistence type="inferred from homology"/>
<organism>
    <name type="scientific">Burkholderia vietnamiensis (strain G4 / LMG 22486)</name>
    <name type="common">Burkholderia cepacia (strain R1808)</name>
    <dbReference type="NCBI Taxonomy" id="269482"/>
    <lineage>
        <taxon>Bacteria</taxon>
        <taxon>Pseudomonadati</taxon>
        <taxon>Pseudomonadota</taxon>
        <taxon>Betaproteobacteria</taxon>
        <taxon>Burkholderiales</taxon>
        <taxon>Burkholderiaceae</taxon>
        <taxon>Burkholderia</taxon>
        <taxon>Burkholderia cepacia complex</taxon>
    </lineage>
</organism>
<accession>A4JBT2</accession>
<sequence length="324" mass="35317">MSVSLQSRPTTIACLLGPTASGKTAAALALAARRPIEIVSVDSALVYRDMDIGTAKPTRDERARVPHHLIDIIDPADSYSAASFRADTLRLIGEIAARGNTPLLAGGTMLYYKALTQGLNDLPGADPALRAELDADAARDGWPALHARLARIDPATAARLAPNDAQRIQRALEVCMLSGQPMSALLAAPRAADDAAAAYRFVPVALEPSDRAVLHARIAQRFDAMLEAGFIDEVERLRRREDLHLGLPSMRCVGYRQAWEYLDGAIDYRTMRDKGIFATRQLCKRQITWLRAMPERIVVDCIARDSTAQALDALERVLDGLAAR</sequence>
<comment type="function">
    <text evidence="1">Catalyzes the transfer of a dimethylallyl group onto the adenine at position 37 in tRNAs that read codons beginning with uridine, leading to the formation of N6-(dimethylallyl)adenosine (i(6)A).</text>
</comment>
<comment type="catalytic activity">
    <reaction evidence="1">
        <text>adenosine(37) in tRNA + dimethylallyl diphosphate = N(6)-dimethylallyladenosine(37) in tRNA + diphosphate</text>
        <dbReference type="Rhea" id="RHEA:26482"/>
        <dbReference type="Rhea" id="RHEA-COMP:10162"/>
        <dbReference type="Rhea" id="RHEA-COMP:10375"/>
        <dbReference type="ChEBI" id="CHEBI:33019"/>
        <dbReference type="ChEBI" id="CHEBI:57623"/>
        <dbReference type="ChEBI" id="CHEBI:74411"/>
        <dbReference type="ChEBI" id="CHEBI:74415"/>
        <dbReference type="EC" id="2.5.1.75"/>
    </reaction>
</comment>
<comment type="cofactor">
    <cofactor evidence="1">
        <name>Mg(2+)</name>
        <dbReference type="ChEBI" id="CHEBI:18420"/>
    </cofactor>
</comment>
<comment type="subunit">
    <text evidence="1">Monomer.</text>
</comment>
<comment type="similarity">
    <text evidence="1">Belongs to the IPP transferase family.</text>
</comment>
<gene>
    <name evidence="1" type="primary">miaA</name>
    <name type="ordered locus">Bcep1808_0723</name>
</gene>